<dbReference type="EMBL" id="BT021042">
    <property type="protein sequence ID" value="AAX09059.1"/>
    <property type="molecule type" value="mRNA"/>
</dbReference>
<dbReference type="EMBL" id="BC134492">
    <property type="protein sequence ID" value="AAI34493.1"/>
    <property type="molecule type" value="mRNA"/>
</dbReference>
<dbReference type="RefSeq" id="NP_001181971.1">
    <property type="nucleotide sequence ID" value="NM_001195042.1"/>
</dbReference>
<dbReference type="SMR" id="Q5E978"/>
<dbReference type="FunCoup" id="Q5E978">
    <property type="interactions" value="172"/>
</dbReference>
<dbReference type="STRING" id="9913.ENSBTAP00000018578"/>
<dbReference type="PaxDb" id="9913-ENSBTAP00000018578"/>
<dbReference type="Ensembl" id="ENSBTAT00000018578.7">
    <property type="protein sequence ID" value="ENSBTAP00000018578.5"/>
    <property type="gene ID" value="ENSBTAG00000013981.7"/>
</dbReference>
<dbReference type="GeneID" id="615641"/>
<dbReference type="KEGG" id="bta:615641"/>
<dbReference type="CTD" id="171546"/>
<dbReference type="VEuPathDB" id="HostDB:ENSBTAG00000013981"/>
<dbReference type="VGNC" id="VGNC:35259">
    <property type="gene designation" value="SPTSSA"/>
</dbReference>
<dbReference type="eggNOG" id="ENOG502S4Q3">
    <property type="taxonomic scope" value="Eukaryota"/>
</dbReference>
<dbReference type="GeneTree" id="ENSGT00390000002766"/>
<dbReference type="HOGENOM" id="CLU_187811_1_0_1"/>
<dbReference type="InParanoid" id="Q5E978"/>
<dbReference type="OMA" id="LEPVERW"/>
<dbReference type="OrthoDB" id="202672at2759"/>
<dbReference type="TreeFam" id="TF328418"/>
<dbReference type="Reactome" id="R-BTA-1660661">
    <property type="pathway name" value="Sphingolipid de novo biosynthesis"/>
</dbReference>
<dbReference type="UniPathway" id="UPA00222"/>
<dbReference type="Proteomes" id="UP000009136">
    <property type="component" value="Chromosome 21"/>
</dbReference>
<dbReference type="Bgee" id="ENSBTAG00000013981">
    <property type="expression patterns" value="Expressed in adult mammalian kidney and 105 other cell types or tissues"/>
</dbReference>
<dbReference type="GO" id="GO:0005783">
    <property type="term" value="C:endoplasmic reticulum"/>
    <property type="evidence" value="ECO:0000250"/>
    <property type="project" value="UniProtKB"/>
</dbReference>
<dbReference type="GO" id="GO:0005789">
    <property type="term" value="C:endoplasmic reticulum membrane"/>
    <property type="evidence" value="ECO:0007669"/>
    <property type="project" value="UniProtKB-SubCell"/>
</dbReference>
<dbReference type="GO" id="GO:0017059">
    <property type="term" value="C:serine palmitoyltransferase complex"/>
    <property type="evidence" value="ECO:0000250"/>
    <property type="project" value="UniProtKB"/>
</dbReference>
<dbReference type="GO" id="GO:0004758">
    <property type="term" value="F:serine C-palmitoyltransferase activity"/>
    <property type="evidence" value="ECO:0007669"/>
    <property type="project" value="Ensembl"/>
</dbReference>
<dbReference type="GO" id="GO:0046513">
    <property type="term" value="P:ceramide biosynthetic process"/>
    <property type="evidence" value="ECO:0000318"/>
    <property type="project" value="GO_Central"/>
</dbReference>
<dbReference type="GO" id="GO:0008104">
    <property type="term" value="P:protein localization"/>
    <property type="evidence" value="ECO:0000250"/>
    <property type="project" value="UniProtKB"/>
</dbReference>
<dbReference type="GO" id="GO:0046512">
    <property type="term" value="P:sphingosine biosynthetic process"/>
    <property type="evidence" value="ECO:0007669"/>
    <property type="project" value="Ensembl"/>
</dbReference>
<dbReference type="InterPro" id="IPR024512">
    <property type="entry name" value="Ser_palmitoyltrfase_ssu-like"/>
</dbReference>
<dbReference type="InterPro" id="IPR051900">
    <property type="entry name" value="SPT_small_subunit"/>
</dbReference>
<dbReference type="PANTHER" id="PTHR47084">
    <property type="entry name" value="SERINE PALMITOYLTRANSFERASE SMALL SUBUNIT A"/>
    <property type="match status" value="1"/>
</dbReference>
<dbReference type="PANTHER" id="PTHR47084:SF1">
    <property type="entry name" value="SERINE PALMITOYLTRANSFERASE SMALL SUBUNIT A"/>
    <property type="match status" value="1"/>
</dbReference>
<dbReference type="Pfam" id="PF11779">
    <property type="entry name" value="SPT_ssu-like"/>
    <property type="match status" value="1"/>
</dbReference>
<proteinExistence type="inferred from homology"/>
<accession>Q5E978</accession>
<accession>A8E4L0</accession>
<protein>
    <recommendedName>
        <fullName>Serine palmitoyltransferase small subunit A</fullName>
    </recommendedName>
    <alternativeName>
        <fullName>Small subunit of serine palmitoyltransferase A</fullName>
        <shortName>ssSPTa</shortName>
    </alternativeName>
</protein>
<comment type="function">
    <text evidence="1">Component of the serine palmitoyltransferase multisubunit enzyme (SPT) that catalyzes the initial and rate-limiting step in sphingolipid biosynthesis by condensing L-serine and activated acyl-CoA (most commonly palmitoyl-CoA) to form long-chain bases. The SPT complex is composed of SPTLC1, SPTLC2 or SPTLC3 and SPTSSA or SPTSSB. Within this complex, the heterodimer consisting of SPTLC1 and SPTLC2/SPTLC3 forms the catalytic core. Within the SPT complex, SPTSSA stimulates the catalytic activity and plays a role in substrate specificity, which depends upon the overall complex composition. The SPTLC1-SPTLC2-SPTSSA complex shows a strong preference for C16-CoA substrate, while the SPTLC1-SPTLC3-SPTSSA isozyme uses both C14-CoA and C16-CoA as substrates, with a slight preference for C14-CoA. Independently of its action as a SPT component, may be involved in MBOAT7 localization to mitochondria-associated membranes, a membrane bridge between the endoplasmic reticulum and mitochondria, may hence affect MBOAT7-catalyzed incorporation of arachidonic acid into phosphatidylinositol.</text>
</comment>
<comment type="pathway">
    <text>Lipid metabolism; sphingolipid metabolism.</text>
</comment>
<comment type="subunit">
    <text evidence="1">Component of the serine palmitoyltransferase (SPT) complex, which is composed of SPTLC1, SPTLC2 or SPTLC3 and SPTSSA or SPTSSB. The heterodimer consisting of SPTLC1 and SPTLC2/SPTLC3 forms the catalytic core of the enzyme, while SPTSSA or SPTSSB subunits determine substrate specificity. SPT also interacts with ORMDL proteins, especially ORMDL3, which negatively regulate SPT activity in the presence of ceramides. Interacts with MBOAT7; the interaction plays a role in MBOAT7 localization to mitochondria-associated membranes.</text>
</comment>
<comment type="subcellular location">
    <subcellularLocation>
        <location evidence="3">Endoplasmic reticulum membrane</location>
        <topology evidence="3">Multi-pass membrane protein</topology>
    </subcellularLocation>
</comment>
<comment type="similarity">
    <text evidence="3">Belongs to the SPTSS family. SPTSSA subfamily.</text>
</comment>
<gene>
    <name type="primary">SPTSSA</name>
    <name type="synonym">SSSPTA</name>
</gene>
<name>SPTSA_BOVIN</name>
<sequence>MALARAWKQMSWFYYQYLLVTALYMLEPWERTVFNSMLVSIVGMALYTGYVFMPQHIMAILHYFEIVQ</sequence>
<evidence type="ECO:0000250" key="1">
    <source>
        <dbReference type="UniProtKB" id="Q969W0"/>
    </source>
</evidence>
<evidence type="ECO:0000255" key="2"/>
<evidence type="ECO:0000305" key="3"/>
<keyword id="KW-0256">Endoplasmic reticulum</keyword>
<keyword id="KW-0443">Lipid metabolism</keyword>
<keyword id="KW-0472">Membrane</keyword>
<keyword id="KW-1185">Reference proteome</keyword>
<keyword id="KW-0746">Sphingolipid metabolism</keyword>
<keyword id="KW-0812">Transmembrane</keyword>
<keyword id="KW-1133">Transmembrane helix</keyword>
<organism>
    <name type="scientific">Bos taurus</name>
    <name type="common">Bovine</name>
    <dbReference type="NCBI Taxonomy" id="9913"/>
    <lineage>
        <taxon>Eukaryota</taxon>
        <taxon>Metazoa</taxon>
        <taxon>Chordata</taxon>
        <taxon>Craniata</taxon>
        <taxon>Vertebrata</taxon>
        <taxon>Euteleostomi</taxon>
        <taxon>Mammalia</taxon>
        <taxon>Eutheria</taxon>
        <taxon>Laurasiatheria</taxon>
        <taxon>Artiodactyla</taxon>
        <taxon>Ruminantia</taxon>
        <taxon>Pecora</taxon>
        <taxon>Bovidae</taxon>
        <taxon>Bovinae</taxon>
        <taxon>Bos</taxon>
    </lineage>
</organism>
<reference key="1">
    <citation type="journal article" date="2005" name="BMC Genomics">
        <title>Characterization of 954 bovine full-CDS cDNA sequences.</title>
        <authorList>
            <person name="Harhay G.P."/>
            <person name="Sonstegard T.S."/>
            <person name="Keele J.W."/>
            <person name="Heaton M.P."/>
            <person name="Clawson M.L."/>
            <person name="Snelling W.M."/>
            <person name="Wiedmann R.T."/>
            <person name="Van Tassell C.P."/>
            <person name="Smith T.P.L."/>
        </authorList>
    </citation>
    <scope>NUCLEOTIDE SEQUENCE [LARGE SCALE MRNA]</scope>
</reference>
<reference key="2">
    <citation type="submission" date="2007-03" db="EMBL/GenBank/DDBJ databases">
        <authorList>
            <consortium name="NIH - Mammalian Gene Collection (MGC) project"/>
        </authorList>
    </citation>
    <scope>NUCLEOTIDE SEQUENCE [LARGE SCALE MRNA]</scope>
    <source>
        <strain>Hereford</strain>
        <tissue>Ascending colon</tissue>
    </source>
</reference>
<feature type="chain" id="PRO_0000089948" description="Serine palmitoyltransferase small subunit A">
    <location>
        <begin position="1"/>
        <end position="68"/>
    </location>
</feature>
<feature type="topological domain" description="Cytoplasmic" evidence="2">
    <location>
        <begin position="1"/>
        <end position="9"/>
    </location>
</feature>
<feature type="transmembrane region" description="Helical" evidence="2">
    <location>
        <begin position="10"/>
        <end position="26"/>
    </location>
</feature>
<feature type="topological domain" description="Lumenal" evidence="2">
    <location>
        <begin position="27"/>
        <end position="31"/>
    </location>
</feature>
<feature type="transmembrane region" description="Helical" evidence="2">
    <location>
        <begin position="32"/>
        <end position="54"/>
    </location>
</feature>
<feature type="topological domain" description="Cytoplasmic" evidence="2">
    <location>
        <begin position="55"/>
        <end position="68"/>
    </location>
</feature>
<feature type="site" description="Within the serine palmitoyltransferase (SPT) complex, defines the length of the acyl chain-binding pocket, determining the acyl-CoA substrate preference" evidence="1">
    <location>
        <position position="25"/>
    </location>
</feature>